<accession>Q48P11</accession>
<evidence type="ECO:0000255" key="1">
    <source>
        <dbReference type="HAMAP-Rule" id="MF_01820"/>
    </source>
</evidence>
<evidence type="ECO:0000255" key="2">
    <source>
        <dbReference type="PROSITE-ProRule" id="PRU01058"/>
    </source>
</evidence>
<feature type="chain" id="PRO_1000188120" description="Small ribosomal subunit biogenesis GTPase RsgA">
    <location>
        <begin position="1"/>
        <end position="343"/>
    </location>
</feature>
<feature type="domain" description="CP-type G" evidence="2">
    <location>
        <begin position="116"/>
        <end position="275"/>
    </location>
</feature>
<feature type="binding site" evidence="1">
    <location>
        <begin position="163"/>
        <end position="166"/>
    </location>
    <ligand>
        <name>GTP</name>
        <dbReference type="ChEBI" id="CHEBI:37565"/>
    </ligand>
</feature>
<feature type="binding site" evidence="1">
    <location>
        <begin position="217"/>
        <end position="225"/>
    </location>
    <ligand>
        <name>GTP</name>
        <dbReference type="ChEBI" id="CHEBI:37565"/>
    </ligand>
</feature>
<feature type="binding site" evidence="1">
    <location>
        <position position="299"/>
    </location>
    <ligand>
        <name>Zn(2+)</name>
        <dbReference type="ChEBI" id="CHEBI:29105"/>
    </ligand>
</feature>
<feature type="binding site" evidence="1">
    <location>
        <position position="304"/>
    </location>
    <ligand>
        <name>Zn(2+)</name>
        <dbReference type="ChEBI" id="CHEBI:29105"/>
    </ligand>
</feature>
<feature type="binding site" evidence="1">
    <location>
        <position position="306"/>
    </location>
    <ligand>
        <name>Zn(2+)</name>
        <dbReference type="ChEBI" id="CHEBI:29105"/>
    </ligand>
</feature>
<feature type="binding site" evidence="1">
    <location>
        <position position="312"/>
    </location>
    <ligand>
        <name>Zn(2+)</name>
        <dbReference type="ChEBI" id="CHEBI:29105"/>
    </ligand>
</feature>
<reference key="1">
    <citation type="journal article" date="2005" name="J. Bacteriol.">
        <title>Whole-genome sequence analysis of Pseudomonas syringae pv. phaseolicola 1448A reveals divergence among pathovars in genes involved in virulence and transposition.</title>
        <authorList>
            <person name="Joardar V."/>
            <person name="Lindeberg M."/>
            <person name="Jackson R.W."/>
            <person name="Selengut J."/>
            <person name="Dodson R."/>
            <person name="Brinkac L.M."/>
            <person name="Daugherty S.C."/>
            <person name="DeBoy R.T."/>
            <person name="Durkin A.S."/>
            <person name="Gwinn Giglio M."/>
            <person name="Madupu R."/>
            <person name="Nelson W.C."/>
            <person name="Rosovitz M.J."/>
            <person name="Sullivan S.A."/>
            <person name="Crabtree J."/>
            <person name="Creasy T."/>
            <person name="Davidsen T.M."/>
            <person name="Haft D.H."/>
            <person name="Zafar N."/>
            <person name="Zhou L."/>
            <person name="Halpin R."/>
            <person name="Holley T."/>
            <person name="Khouri H.M."/>
            <person name="Feldblyum T.V."/>
            <person name="White O."/>
            <person name="Fraser C.M."/>
            <person name="Chatterjee A.K."/>
            <person name="Cartinhour S."/>
            <person name="Schneider D."/>
            <person name="Mansfield J.W."/>
            <person name="Collmer A."/>
            <person name="Buell R."/>
        </authorList>
    </citation>
    <scope>NUCLEOTIDE SEQUENCE [LARGE SCALE GENOMIC DNA]</scope>
    <source>
        <strain>1448A / Race 6</strain>
    </source>
</reference>
<name>RSGA_PSE14</name>
<dbReference type="EC" id="3.6.1.-" evidence="1"/>
<dbReference type="EMBL" id="CP000058">
    <property type="protein sequence ID" value="AAZ37916.1"/>
    <property type="molecule type" value="Genomic_DNA"/>
</dbReference>
<dbReference type="RefSeq" id="WP_002551811.1">
    <property type="nucleotide sequence ID" value="NC_005773.3"/>
</dbReference>
<dbReference type="SMR" id="Q48P11"/>
<dbReference type="GeneID" id="69857617"/>
<dbReference type="KEGG" id="psp:PSPPH_0556"/>
<dbReference type="eggNOG" id="COG1162">
    <property type="taxonomic scope" value="Bacteria"/>
</dbReference>
<dbReference type="HOGENOM" id="CLU_033617_2_0_6"/>
<dbReference type="Proteomes" id="UP000000551">
    <property type="component" value="Chromosome"/>
</dbReference>
<dbReference type="GO" id="GO:0005737">
    <property type="term" value="C:cytoplasm"/>
    <property type="evidence" value="ECO:0007669"/>
    <property type="project" value="UniProtKB-SubCell"/>
</dbReference>
<dbReference type="GO" id="GO:0005525">
    <property type="term" value="F:GTP binding"/>
    <property type="evidence" value="ECO:0007669"/>
    <property type="project" value="UniProtKB-UniRule"/>
</dbReference>
<dbReference type="GO" id="GO:0003924">
    <property type="term" value="F:GTPase activity"/>
    <property type="evidence" value="ECO:0007669"/>
    <property type="project" value="UniProtKB-UniRule"/>
</dbReference>
<dbReference type="GO" id="GO:0046872">
    <property type="term" value="F:metal ion binding"/>
    <property type="evidence" value="ECO:0007669"/>
    <property type="project" value="UniProtKB-KW"/>
</dbReference>
<dbReference type="GO" id="GO:0019843">
    <property type="term" value="F:rRNA binding"/>
    <property type="evidence" value="ECO:0007669"/>
    <property type="project" value="UniProtKB-KW"/>
</dbReference>
<dbReference type="GO" id="GO:0042274">
    <property type="term" value="P:ribosomal small subunit biogenesis"/>
    <property type="evidence" value="ECO:0007669"/>
    <property type="project" value="UniProtKB-UniRule"/>
</dbReference>
<dbReference type="CDD" id="cd01854">
    <property type="entry name" value="YjeQ_EngC"/>
    <property type="match status" value="1"/>
</dbReference>
<dbReference type="Gene3D" id="2.40.50.140">
    <property type="entry name" value="Nucleic acid-binding proteins"/>
    <property type="match status" value="1"/>
</dbReference>
<dbReference type="Gene3D" id="3.40.50.300">
    <property type="entry name" value="P-loop containing nucleotide triphosphate hydrolases"/>
    <property type="match status" value="1"/>
</dbReference>
<dbReference type="Gene3D" id="1.10.40.50">
    <property type="entry name" value="Probable gtpase engc, domain 3"/>
    <property type="match status" value="1"/>
</dbReference>
<dbReference type="HAMAP" id="MF_01820">
    <property type="entry name" value="GTPase_RsgA"/>
    <property type="match status" value="1"/>
</dbReference>
<dbReference type="InterPro" id="IPR030378">
    <property type="entry name" value="G_CP_dom"/>
</dbReference>
<dbReference type="InterPro" id="IPR012340">
    <property type="entry name" value="NA-bd_OB-fold"/>
</dbReference>
<dbReference type="InterPro" id="IPR027417">
    <property type="entry name" value="P-loop_NTPase"/>
</dbReference>
<dbReference type="InterPro" id="IPR004881">
    <property type="entry name" value="Ribosome_biogen_GTPase_RsgA"/>
</dbReference>
<dbReference type="InterPro" id="IPR010914">
    <property type="entry name" value="RsgA_GTPase_dom"/>
</dbReference>
<dbReference type="NCBIfam" id="NF008931">
    <property type="entry name" value="PRK12288.1"/>
    <property type="match status" value="1"/>
</dbReference>
<dbReference type="NCBIfam" id="TIGR00157">
    <property type="entry name" value="ribosome small subunit-dependent GTPase A"/>
    <property type="match status" value="1"/>
</dbReference>
<dbReference type="PANTHER" id="PTHR32120">
    <property type="entry name" value="SMALL RIBOSOMAL SUBUNIT BIOGENESIS GTPASE RSGA"/>
    <property type="match status" value="1"/>
</dbReference>
<dbReference type="PANTHER" id="PTHR32120:SF11">
    <property type="entry name" value="SMALL RIBOSOMAL SUBUNIT BIOGENESIS GTPASE RSGA 1, MITOCHONDRIAL-RELATED"/>
    <property type="match status" value="1"/>
</dbReference>
<dbReference type="Pfam" id="PF03193">
    <property type="entry name" value="RsgA_GTPase"/>
    <property type="match status" value="1"/>
</dbReference>
<dbReference type="SUPFAM" id="SSF52540">
    <property type="entry name" value="P-loop containing nucleoside triphosphate hydrolases"/>
    <property type="match status" value="1"/>
</dbReference>
<dbReference type="PROSITE" id="PS50936">
    <property type="entry name" value="ENGC_GTPASE"/>
    <property type="match status" value="1"/>
</dbReference>
<dbReference type="PROSITE" id="PS51721">
    <property type="entry name" value="G_CP"/>
    <property type="match status" value="1"/>
</dbReference>
<keyword id="KW-0963">Cytoplasm</keyword>
<keyword id="KW-0342">GTP-binding</keyword>
<keyword id="KW-0378">Hydrolase</keyword>
<keyword id="KW-0479">Metal-binding</keyword>
<keyword id="KW-0547">Nucleotide-binding</keyword>
<keyword id="KW-0690">Ribosome biogenesis</keyword>
<keyword id="KW-0694">RNA-binding</keyword>
<keyword id="KW-0699">rRNA-binding</keyword>
<keyword id="KW-0862">Zinc</keyword>
<comment type="function">
    <text evidence="1">One of several proteins that assist in the late maturation steps of the functional core of the 30S ribosomal subunit. Helps release RbfA from mature subunits. May play a role in the assembly of ribosomal proteins into the subunit. Circularly permuted GTPase that catalyzes slow GTP hydrolysis, GTPase activity is stimulated by the 30S ribosomal subunit.</text>
</comment>
<comment type="cofactor">
    <cofactor evidence="1">
        <name>Zn(2+)</name>
        <dbReference type="ChEBI" id="CHEBI:29105"/>
    </cofactor>
    <text evidence="1">Binds 1 zinc ion per subunit.</text>
</comment>
<comment type="subunit">
    <text evidence="1">Monomer. Associates with 30S ribosomal subunit, binds 16S rRNA.</text>
</comment>
<comment type="subcellular location">
    <subcellularLocation>
        <location evidence="1">Cytoplasm</location>
    </subcellularLocation>
</comment>
<comment type="similarity">
    <text evidence="1">Belongs to the TRAFAC class YlqF/YawG GTPase family. RsgA subfamily.</text>
</comment>
<proteinExistence type="inferred from homology"/>
<sequence>MAKRQLNRRQNWRIEKIQGERAARAAKRESATLETLEGGDLGPEQTGLVIAHFGVQVEVEAQEGEASGQVFRCHLRANLPALVTGDRVVWRAGNQGIGVIVAQLPRTTELRRPDSRGQLKPVAANVDLIVIVFAPMPEPHANLIDRYLVAAEHAGIRPLLLLNKADLIDEQNAPALNALLAVYRTLGYPVLEVSAHHGDGMQTLQSQLDGHISVFVGQSGVGKSSLVNSLLPETDTRVGPLSEVSGQGTHTTTTARLFHFPRGGDLIDSPGIREFGLGHVSRADVEAGFIEFNDLIGTCRFRDCKHDREPGCALLKGLEDGRVQQQRMNSYRSIIASLPQDSY</sequence>
<protein>
    <recommendedName>
        <fullName evidence="1">Small ribosomal subunit biogenesis GTPase RsgA</fullName>
        <ecNumber evidence="1">3.6.1.-</ecNumber>
    </recommendedName>
</protein>
<organism>
    <name type="scientific">Pseudomonas savastanoi pv. phaseolicola (strain 1448A / Race 6)</name>
    <name type="common">Pseudomonas syringae pv. phaseolicola (strain 1448A / Race 6)</name>
    <dbReference type="NCBI Taxonomy" id="264730"/>
    <lineage>
        <taxon>Bacteria</taxon>
        <taxon>Pseudomonadati</taxon>
        <taxon>Pseudomonadota</taxon>
        <taxon>Gammaproteobacteria</taxon>
        <taxon>Pseudomonadales</taxon>
        <taxon>Pseudomonadaceae</taxon>
        <taxon>Pseudomonas</taxon>
    </lineage>
</organism>
<gene>
    <name evidence="1" type="primary">rsgA</name>
    <name type="ordered locus">PSPPH_0556</name>
</gene>